<sequence length="103" mass="11409">MSGRGKGGKGLGKGGAKRHRKVLRDNIQGITKPAIRRLARRGGVKRISGLIYEETRGVLKIFLENVIRDAVTYTEHARRKTVTAMDVVYALKRQGRTLYGFGG</sequence>
<protein>
    <recommendedName>
        <fullName>Histone H4</fullName>
    </recommendedName>
</protein>
<comment type="function">
    <text>Core component of nucleosome. Nucleosomes wrap and compact DNA into chromatin, limiting DNA accessibility to the cellular machineries which require DNA as a template. Histones thereby play a central role in transcription regulation, DNA repair, DNA replication and chromosomal stability. DNA accessibility is regulated via a complex set of post-translational modifications of histones, also called histone code, and nucleosome remodeling.</text>
</comment>
<comment type="subunit">
    <text>The nucleosome is a histone octamer containing two molecules each of H2A, H2B, H3 and H4 assembled in one H3-H4 heterotetramer and two H2A-H2B heterodimers. The octamer wraps approximately 147 bp of DNA.</text>
</comment>
<comment type="subcellular location">
    <subcellularLocation>
        <location evidence="1">Nucleus</location>
    </subcellularLocation>
    <subcellularLocation>
        <location evidence="1">Chromosome</location>
    </subcellularLocation>
</comment>
<comment type="similarity">
    <text evidence="3">Belongs to the histone H4 family.</text>
</comment>
<keyword id="KW-0007">Acetylation</keyword>
<keyword id="KW-0158">Chromosome</keyword>
<keyword id="KW-0238">DNA-binding</keyword>
<keyword id="KW-0544">Nucleosome core</keyword>
<keyword id="KW-0539">Nucleus</keyword>
<feature type="initiator methionine" description="Removed" evidence="1">
    <location>
        <position position="1"/>
    </location>
</feature>
<feature type="chain" id="PRO_0000158321" description="Histone H4">
    <location>
        <begin position="2"/>
        <end position="103"/>
    </location>
</feature>
<feature type="DNA-binding region">
    <location>
        <begin position="17"/>
        <end position="21"/>
    </location>
</feature>
<feature type="region of interest" description="Disordered" evidence="2">
    <location>
        <begin position="1"/>
        <end position="20"/>
    </location>
</feature>
<feature type="compositionally biased region" description="Gly residues" evidence="2">
    <location>
        <begin position="1"/>
        <end position="14"/>
    </location>
</feature>
<feature type="modified residue" description="N-acetylserine" evidence="1">
    <location>
        <position position="2"/>
    </location>
</feature>
<feature type="modified residue" description="N6-acetyllysine" evidence="1">
    <location>
        <position position="6"/>
    </location>
</feature>
<feature type="modified residue" description="N6-acetyllysine" evidence="1">
    <location>
        <position position="9"/>
    </location>
</feature>
<feature type="modified residue" description="N6-acetyllysine" evidence="1">
    <location>
        <position position="13"/>
    </location>
</feature>
<feature type="modified residue" description="N6-acetyllysine" evidence="1">
    <location>
        <position position="17"/>
    </location>
</feature>
<feature type="modified residue" description="N6-acetyllysine" evidence="1">
    <location>
        <position position="21"/>
    </location>
</feature>
<accession>P62887</accession>
<accession>P02308</accession>
<accession>P59258</accession>
<reference key="1">
    <citation type="submission" date="1994-06" db="EMBL/GenBank/DDBJ databases">
        <title>The isolation and characterization of two cDNA clones from Lolium temulentum encoding the histones H3 and H4.</title>
        <authorList>
            <person name="Freeman D.R."/>
            <person name="Ougham H.J."/>
        </authorList>
    </citation>
    <scope>NUCLEOTIDE SEQUENCE [MRNA]</scope>
</reference>
<evidence type="ECO:0000250" key="1"/>
<evidence type="ECO:0000256" key="2">
    <source>
        <dbReference type="SAM" id="MobiDB-lite"/>
    </source>
</evidence>
<evidence type="ECO:0000305" key="3"/>
<proteinExistence type="inferred from homology"/>
<name>H4_LOLTE</name>
<organism>
    <name type="scientific">Lolium temulentum</name>
    <name type="common">Darnel rye-grass</name>
    <dbReference type="NCBI Taxonomy" id="34176"/>
    <lineage>
        <taxon>Eukaryota</taxon>
        <taxon>Viridiplantae</taxon>
        <taxon>Streptophyta</taxon>
        <taxon>Embryophyta</taxon>
        <taxon>Tracheophyta</taxon>
        <taxon>Spermatophyta</taxon>
        <taxon>Magnoliopsida</taxon>
        <taxon>Liliopsida</taxon>
        <taxon>Poales</taxon>
        <taxon>Poaceae</taxon>
        <taxon>BOP clade</taxon>
        <taxon>Pooideae</taxon>
        <taxon>Poodae</taxon>
        <taxon>Poeae</taxon>
        <taxon>Poeae Chloroplast Group 2 (Poeae type)</taxon>
        <taxon>Loliodinae</taxon>
        <taxon>Loliinae</taxon>
        <taxon>Lolium</taxon>
    </lineage>
</organism>
<dbReference type="EMBL" id="X79715">
    <property type="protein sequence ID" value="CAA56154.1"/>
    <property type="molecule type" value="mRNA"/>
</dbReference>
<dbReference type="SMR" id="P62887"/>
<dbReference type="GO" id="GO:0000786">
    <property type="term" value="C:nucleosome"/>
    <property type="evidence" value="ECO:0007669"/>
    <property type="project" value="UniProtKB-KW"/>
</dbReference>
<dbReference type="GO" id="GO:0005634">
    <property type="term" value="C:nucleus"/>
    <property type="evidence" value="ECO:0007669"/>
    <property type="project" value="UniProtKB-SubCell"/>
</dbReference>
<dbReference type="GO" id="GO:0003677">
    <property type="term" value="F:DNA binding"/>
    <property type="evidence" value="ECO:0007669"/>
    <property type="project" value="UniProtKB-KW"/>
</dbReference>
<dbReference type="GO" id="GO:0046982">
    <property type="term" value="F:protein heterodimerization activity"/>
    <property type="evidence" value="ECO:0007669"/>
    <property type="project" value="InterPro"/>
</dbReference>
<dbReference type="GO" id="GO:0030527">
    <property type="term" value="F:structural constituent of chromatin"/>
    <property type="evidence" value="ECO:0007669"/>
    <property type="project" value="InterPro"/>
</dbReference>
<dbReference type="CDD" id="cd22912">
    <property type="entry name" value="HFD_H4"/>
    <property type="match status" value="1"/>
</dbReference>
<dbReference type="FunFam" id="1.10.20.10:FF:000002">
    <property type="entry name" value="Histone H4"/>
    <property type="match status" value="1"/>
</dbReference>
<dbReference type="Gene3D" id="1.10.20.10">
    <property type="entry name" value="Histone, subunit A"/>
    <property type="match status" value="1"/>
</dbReference>
<dbReference type="InterPro" id="IPR035425">
    <property type="entry name" value="CENP-T/H4_C"/>
</dbReference>
<dbReference type="InterPro" id="IPR009072">
    <property type="entry name" value="Histone-fold"/>
</dbReference>
<dbReference type="InterPro" id="IPR001951">
    <property type="entry name" value="Histone_H4"/>
</dbReference>
<dbReference type="InterPro" id="IPR019809">
    <property type="entry name" value="Histone_H4_CS"/>
</dbReference>
<dbReference type="PANTHER" id="PTHR10484">
    <property type="entry name" value="HISTONE H4"/>
    <property type="match status" value="1"/>
</dbReference>
<dbReference type="Pfam" id="PF15511">
    <property type="entry name" value="CENP-T_C"/>
    <property type="match status" value="1"/>
</dbReference>
<dbReference type="PRINTS" id="PR00623">
    <property type="entry name" value="HISTONEH4"/>
</dbReference>
<dbReference type="SMART" id="SM00417">
    <property type="entry name" value="H4"/>
    <property type="match status" value="1"/>
</dbReference>
<dbReference type="SUPFAM" id="SSF47113">
    <property type="entry name" value="Histone-fold"/>
    <property type="match status" value="1"/>
</dbReference>
<dbReference type="PROSITE" id="PS00047">
    <property type="entry name" value="HISTONE_H4"/>
    <property type="match status" value="1"/>
</dbReference>